<gene>
    <name type="primary">tdpA</name>
</gene>
<keyword id="KW-1003">Cell membrane</keyword>
<keyword id="KW-0449">Lipoprotein</keyword>
<keyword id="KW-0472">Membrane</keyword>
<keyword id="KW-0564">Palmitate</keyword>
<keyword id="KW-0732">Signal</keyword>
<name>TA53_TREDN</name>
<feature type="signal peptide" evidence="1">
    <location>
        <begin position="1"/>
        <end position="16"/>
    </location>
</feature>
<feature type="chain" id="PRO_0000018203" description="53 kDa membrane antigen A">
    <location>
        <begin position="17"/>
        <end position="490"/>
    </location>
</feature>
<feature type="lipid moiety-binding region" description="N-palmitoyl cysteine" evidence="2">
    <location>
        <position position="17"/>
    </location>
</feature>
<feature type="lipid moiety-binding region" description="S-diacylglycerol cysteine" evidence="2">
    <location>
        <position position="17"/>
    </location>
</feature>
<reference key="1">
    <citation type="journal article" date="1991" name="Infect. Immun.">
        <title>Molecular cloning and sequence analysis of antigen gene tdpA of Treponema denticola.</title>
        <authorList>
            <person name="Miyamoto M."/>
            <person name="Noji S."/>
            <person name="Kokeguchi S."/>
            <person name="Kato K."/>
            <person name="Kurihara H."/>
            <person name="Murayama Y."/>
            <person name="Taniguchi S."/>
        </authorList>
    </citation>
    <scope>NUCLEOTIDE SEQUENCE [GENOMIC DNA]</scope>
    <source>
        <strain>Johnson</strain>
    </source>
</reference>
<organism>
    <name type="scientific">Treponema denticola</name>
    <dbReference type="NCBI Taxonomy" id="158"/>
    <lineage>
        <taxon>Bacteria</taxon>
        <taxon>Pseudomonadati</taxon>
        <taxon>Spirochaetota</taxon>
        <taxon>Spirochaetia</taxon>
        <taxon>Spirochaetales</taxon>
        <taxon>Treponemataceae</taxon>
        <taxon>Treponema</taxon>
    </lineage>
</organism>
<comment type="subcellular location">
    <subcellularLocation>
        <location evidence="2">Cell membrane</location>
        <topology evidence="2">Lipid-anchor</topology>
    </subcellularLocation>
</comment>
<evidence type="ECO:0000255" key="1">
    <source>
        <dbReference type="PROSITE-ProRule" id="PRU00303"/>
    </source>
</evidence>
<evidence type="ECO:0000305" key="2"/>
<sequence length="490" mass="53408">MKKKLFFALLVLILSSCSLFFQKEYGTITIDLEGGRARSINSSTGLPNLADSELEIDILTEGNSSIYKKILASEPKFFQADFPIGSRLEITVKLNGPSSSWSAHNSHTVKEGNNDIRLLLNKNASSLANVGFSTAAVVNKYEFNIAGKRIDINSRELPVFTRDSRGRLYIAYKDINWKLNRYESDGTPNNFASDSPILTTITGASSVNLASDPVTGKVYVAADSNLYRIKDDGAVTPTGGTAHPAGPIAVYNNNLFVLGVSAVSGNNPLKMFTITEEGSVLTLNQAGSLIPVSTGQITISTSGSETTINVDFKDILVKKDKIYILFAKNNLPTPSTPSPYYSLGGMLEYTYNSSGVIDNPQKYGFNDTVTAGDDIVTAGEANFYGPACFIGYDEQSISIADDGCTFKKEGGSVRIYKNVNRIFSFNTSTKSLYSYATENKWFNEYEETATPPPPLPVRLARSYCGRKIVIRGIPRSAYLSRVAQFVCKTL</sequence>
<accession>P18164</accession>
<dbReference type="EMBL" id="D00598">
    <property type="protein sequence ID" value="BAA00474.1"/>
    <property type="status" value="ALT_TERM"/>
    <property type="molecule type" value="Genomic_DNA"/>
</dbReference>
<dbReference type="PIR" id="A60330">
    <property type="entry name" value="A60330"/>
</dbReference>
<dbReference type="SMR" id="P18164"/>
<dbReference type="GO" id="GO:0005886">
    <property type="term" value="C:plasma membrane"/>
    <property type="evidence" value="ECO:0007669"/>
    <property type="project" value="UniProtKB-SubCell"/>
</dbReference>
<dbReference type="PROSITE" id="PS51257">
    <property type="entry name" value="PROKAR_LIPOPROTEIN"/>
    <property type="match status" value="1"/>
</dbReference>
<protein>
    <recommendedName>
        <fullName>53 kDa membrane antigen A</fullName>
        <shortName>Protein A</shortName>
    </recommendedName>
</protein>
<proteinExistence type="inferred from homology"/>